<proteinExistence type="inferred from homology"/>
<dbReference type="EC" id="2.1.1.-"/>
<dbReference type="EMBL" id="BA000033">
    <property type="protein sequence ID" value="BAB95703.1"/>
    <property type="molecule type" value="Genomic_DNA"/>
</dbReference>
<dbReference type="SMR" id="Q8NVT4"/>
<dbReference type="KEGG" id="sam:MW1838"/>
<dbReference type="HOGENOM" id="CLU_014689_7_0_9"/>
<dbReference type="GO" id="GO:0051539">
    <property type="term" value="F:4 iron, 4 sulfur cluster binding"/>
    <property type="evidence" value="ECO:0007669"/>
    <property type="project" value="UniProtKB-KW"/>
</dbReference>
<dbReference type="GO" id="GO:0046872">
    <property type="term" value="F:metal ion binding"/>
    <property type="evidence" value="ECO:0007669"/>
    <property type="project" value="UniProtKB-KW"/>
</dbReference>
<dbReference type="GO" id="GO:0070041">
    <property type="term" value="F:rRNA (uridine-C5-)-methyltransferase activity"/>
    <property type="evidence" value="ECO:0007669"/>
    <property type="project" value="TreeGrafter"/>
</dbReference>
<dbReference type="GO" id="GO:0070475">
    <property type="term" value="P:rRNA base methylation"/>
    <property type="evidence" value="ECO:0007669"/>
    <property type="project" value="TreeGrafter"/>
</dbReference>
<dbReference type="CDD" id="cd02440">
    <property type="entry name" value="AdoMet_MTases"/>
    <property type="match status" value="1"/>
</dbReference>
<dbReference type="FunFam" id="3.40.50.150:FF:000009">
    <property type="entry name" value="23S rRNA (Uracil(1939)-C(5))-methyltransferase RlmD"/>
    <property type="match status" value="1"/>
</dbReference>
<dbReference type="FunFam" id="2.40.50.140:FF:000097">
    <property type="entry name" value="23S rRNA (uracil(1939)-C(5))-methyltransferase RlmD"/>
    <property type="match status" value="1"/>
</dbReference>
<dbReference type="FunFam" id="2.40.50.1070:FF:000003">
    <property type="entry name" value="23S rRNA (Uracil-5-)-methyltransferase RumA"/>
    <property type="match status" value="1"/>
</dbReference>
<dbReference type="Gene3D" id="2.40.50.1070">
    <property type="match status" value="1"/>
</dbReference>
<dbReference type="Gene3D" id="2.40.50.140">
    <property type="entry name" value="Nucleic acid-binding proteins"/>
    <property type="match status" value="1"/>
</dbReference>
<dbReference type="Gene3D" id="3.40.50.150">
    <property type="entry name" value="Vaccinia Virus protein VP39"/>
    <property type="match status" value="1"/>
</dbReference>
<dbReference type="InterPro" id="IPR030390">
    <property type="entry name" value="MeTrfase_TrmA_AS"/>
</dbReference>
<dbReference type="InterPro" id="IPR030391">
    <property type="entry name" value="MeTrfase_TrmA_CS"/>
</dbReference>
<dbReference type="InterPro" id="IPR012340">
    <property type="entry name" value="NA-bd_OB-fold"/>
</dbReference>
<dbReference type="InterPro" id="IPR029063">
    <property type="entry name" value="SAM-dependent_MTases_sf"/>
</dbReference>
<dbReference type="InterPro" id="IPR010280">
    <property type="entry name" value="U5_MeTrfase_fam"/>
</dbReference>
<dbReference type="NCBIfam" id="TIGR00479">
    <property type="entry name" value="rumA"/>
    <property type="match status" value="1"/>
</dbReference>
<dbReference type="PANTHER" id="PTHR11061">
    <property type="entry name" value="RNA M5U METHYLTRANSFERASE"/>
    <property type="match status" value="1"/>
</dbReference>
<dbReference type="PANTHER" id="PTHR11061:SF30">
    <property type="entry name" value="TRNA (URACIL(54)-C(5))-METHYLTRANSFERASE"/>
    <property type="match status" value="1"/>
</dbReference>
<dbReference type="Pfam" id="PF05958">
    <property type="entry name" value="tRNA_U5-meth_tr"/>
    <property type="match status" value="1"/>
</dbReference>
<dbReference type="SUPFAM" id="SSF50249">
    <property type="entry name" value="Nucleic acid-binding proteins"/>
    <property type="match status" value="1"/>
</dbReference>
<dbReference type="SUPFAM" id="SSF53335">
    <property type="entry name" value="S-adenosyl-L-methionine-dependent methyltransferases"/>
    <property type="match status" value="1"/>
</dbReference>
<dbReference type="PROSITE" id="PS51687">
    <property type="entry name" value="SAM_MT_RNA_M5U"/>
    <property type="match status" value="1"/>
</dbReference>
<dbReference type="PROSITE" id="PS01230">
    <property type="entry name" value="TRMA_1"/>
    <property type="match status" value="1"/>
</dbReference>
<dbReference type="PROSITE" id="PS01231">
    <property type="entry name" value="TRMA_2"/>
    <property type="match status" value="1"/>
</dbReference>
<reference key="1">
    <citation type="journal article" date="2002" name="Lancet">
        <title>Genome and virulence determinants of high virulence community-acquired MRSA.</title>
        <authorList>
            <person name="Baba T."/>
            <person name="Takeuchi F."/>
            <person name="Kuroda M."/>
            <person name="Yuzawa H."/>
            <person name="Aoki K."/>
            <person name="Oguchi A."/>
            <person name="Nagai Y."/>
            <person name="Iwama N."/>
            <person name="Asano K."/>
            <person name="Naimi T."/>
            <person name="Kuroda H."/>
            <person name="Cui L."/>
            <person name="Yamamoto K."/>
            <person name="Hiramatsu K."/>
        </authorList>
    </citation>
    <scope>NUCLEOTIDE SEQUENCE [LARGE SCALE GENOMIC DNA]</scope>
    <source>
        <strain>MW2</strain>
    </source>
</reference>
<accession>Q8NVT4</accession>
<organism>
    <name type="scientific">Staphylococcus aureus (strain MW2)</name>
    <dbReference type="NCBI Taxonomy" id="196620"/>
    <lineage>
        <taxon>Bacteria</taxon>
        <taxon>Bacillati</taxon>
        <taxon>Bacillota</taxon>
        <taxon>Bacilli</taxon>
        <taxon>Bacillales</taxon>
        <taxon>Staphylococcaceae</taxon>
        <taxon>Staphylococcus</taxon>
    </lineage>
</organism>
<name>Y1838_STAAW</name>
<comment type="similarity">
    <text evidence="2">Belongs to the class I-like SAM-binding methyltransferase superfamily. RNA M5U methyltransferase family.</text>
</comment>
<evidence type="ECO:0000250" key="1"/>
<evidence type="ECO:0000255" key="2">
    <source>
        <dbReference type="PROSITE-ProRule" id="PRU01024"/>
    </source>
</evidence>
<gene>
    <name type="ordered locus">MW1838</name>
</gene>
<protein>
    <recommendedName>
        <fullName>Uncharacterized RNA methyltransferase MW1838</fullName>
        <ecNumber>2.1.1.-</ecNumber>
    </recommendedName>
</protein>
<keyword id="KW-0004">4Fe-4S</keyword>
<keyword id="KW-0408">Iron</keyword>
<keyword id="KW-0411">Iron-sulfur</keyword>
<keyword id="KW-0479">Metal-binding</keyword>
<keyword id="KW-0489">Methyltransferase</keyword>
<keyword id="KW-0949">S-adenosyl-L-methionine</keyword>
<keyword id="KW-0808">Transferase</keyword>
<feature type="chain" id="PRO_0000162020" description="Uncharacterized RNA methyltransferase MW1838">
    <location>
        <begin position="1"/>
        <end position="453"/>
    </location>
</feature>
<feature type="active site" description="Nucleophile" evidence="2">
    <location>
        <position position="411"/>
    </location>
</feature>
<feature type="binding site" evidence="1">
    <location>
        <position position="74"/>
    </location>
    <ligand>
        <name>[4Fe-4S] cluster</name>
        <dbReference type="ChEBI" id="CHEBI:49883"/>
    </ligand>
</feature>
<feature type="binding site" evidence="1">
    <location>
        <position position="80"/>
    </location>
    <ligand>
        <name>[4Fe-4S] cluster</name>
        <dbReference type="ChEBI" id="CHEBI:49883"/>
    </ligand>
</feature>
<feature type="binding site" evidence="1">
    <location>
        <position position="83"/>
    </location>
    <ligand>
        <name>[4Fe-4S] cluster</name>
        <dbReference type="ChEBI" id="CHEBI:49883"/>
    </ligand>
</feature>
<feature type="binding site" evidence="1">
    <location>
        <position position="162"/>
    </location>
    <ligand>
        <name>[4Fe-4S] cluster</name>
        <dbReference type="ChEBI" id="CHEBI:49883"/>
    </ligand>
</feature>
<feature type="binding site" evidence="2">
    <location>
        <position position="286"/>
    </location>
    <ligand>
        <name>S-adenosyl-L-methionine</name>
        <dbReference type="ChEBI" id="CHEBI:59789"/>
    </ligand>
</feature>
<feature type="binding site" evidence="2">
    <location>
        <position position="315"/>
    </location>
    <ligand>
        <name>S-adenosyl-L-methionine</name>
        <dbReference type="ChEBI" id="CHEBI:59789"/>
    </ligand>
</feature>
<feature type="binding site" evidence="2">
    <location>
        <position position="336"/>
    </location>
    <ligand>
        <name>S-adenosyl-L-methionine</name>
        <dbReference type="ChEBI" id="CHEBI:59789"/>
    </ligand>
</feature>
<feature type="binding site" evidence="2">
    <location>
        <position position="384"/>
    </location>
    <ligand>
        <name>S-adenosyl-L-methionine</name>
        <dbReference type="ChEBI" id="CHEBI:59789"/>
    </ligand>
</feature>
<sequence>MQAIAKNDIKTGTVVDLTHEGHGVVKIDRFPIFIPQALINEQIEYKIIKVKKNFAIGKLLNINTRSENRVAPPCIYYERCGGCQLQHLSYEAQLEMKKEQVINLFQRKAHFDNSKINDTVGMTDPWRYRNKSQIPVGKNEQNEVIMGFYRQRSHDIIDMESCLIQDSQHQEVMNEVKSILKDLNVSIYQEQLKKGLMRHLVVRTGYHTDEMMIIFVTNGKKWPQKNAVVEKILDAFPNVTSIKQNINDSHSNVIMGRQSITLYGKDTIIDQLTDSTFKISDQSFYQINSEQTEKLYNKAIEYAQLTGNEVVLDTYCGIGTIGLYMAPHAKHVYGVEVVPSAIEDAQQNATINQCNNTTFVCGKAEEVILQWKAQGIKPDVVMVDPPRKGCDETFIQTLLTLEPKRIVYISCNPATQQRDALLLAEKYQLEEVTPVDMFPQTTHVETVALFNLK</sequence>